<sequence length="415" mass="47772">MANRNLSESLFKPRQKHQETSTLVKHRDPRLIAGNYSTLDGNSHGSWYRMINRLMWIWREIDPFEIEEVLCRIAMTNAQRSDDNLLDTVIGYRKGNWVFEWSHQAMLWQQRALQAEQIPEASNFWLKAANLYSIAGYPHLKGDELSQQAVILANKAYENAARCSGYQLRKIEFKLKEGGCVTGFLHLPQQLQRPSPTILVCGSLDNLQSDYYRLFRDYLAPLGFAMLTVDMPSIGYSSRLRMTQDTCILHQQIIHQLDEIPWIDHTRIGLFGFRFGANIAVRLAYLESKRIKGVATLGAIVHEWLSSVERQQNSPSMYLDMFASRLGIYNVDEKAFRLELGCYSLKKQGLLGRRCSVPMLAGYWQNDIFSPKEESKLIAMSSMDSQLLAIPTTPVYNSFNKALREISQWLRNKVC</sequence>
<name>FRSA_PHOLL</name>
<reference key="1">
    <citation type="journal article" date="2003" name="Nat. Biotechnol.">
        <title>The genome sequence of the entomopathogenic bacterium Photorhabdus luminescens.</title>
        <authorList>
            <person name="Duchaud E."/>
            <person name="Rusniok C."/>
            <person name="Frangeul L."/>
            <person name="Buchrieser C."/>
            <person name="Givaudan A."/>
            <person name="Taourit S."/>
            <person name="Bocs S."/>
            <person name="Boursaux-Eude C."/>
            <person name="Chandler M."/>
            <person name="Charles J.-F."/>
            <person name="Dassa E."/>
            <person name="Derose R."/>
            <person name="Derzelle S."/>
            <person name="Freyssinet G."/>
            <person name="Gaudriault S."/>
            <person name="Medigue C."/>
            <person name="Lanois A."/>
            <person name="Powell K."/>
            <person name="Siguier P."/>
            <person name="Vincent R."/>
            <person name="Wingate V."/>
            <person name="Zouine M."/>
            <person name="Glaser P."/>
            <person name="Boemare N."/>
            <person name="Danchin A."/>
            <person name="Kunst F."/>
        </authorList>
    </citation>
    <scope>NUCLEOTIDE SEQUENCE [LARGE SCALE GENOMIC DNA]</scope>
    <source>
        <strain>DSM 15139 / CIP 105565 / TT01</strain>
    </source>
</reference>
<dbReference type="EC" id="3.1.1.1" evidence="1"/>
<dbReference type="EMBL" id="BX571863">
    <property type="protein sequence ID" value="CAE13536.1"/>
    <property type="molecule type" value="Genomic_DNA"/>
</dbReference>
<dbReference type="RefSeq" id="WP_011145567.1">
    <property type="nucleotide sequence ID" value="NC_005126.1"/>
</dbReference>
<dbReference type="SMR" id="Q7N7B3"/>
<dbReference type="STRING" id="243265.plu1242"/>
<dbReference type="ESTHER" id="pholl-y1242">
    <property type="family name" value="Duf_1100-R"/>
</dbReference>
<dbReference type="GeneID" id="48847512"/>
<dbReference type="KEGG" id="plu:plu1242"/>
<dbReference type="eggNOG" id="COG1073">
    <property type="taxonomic scope" value="Bacteria"/>
</dbReference>
<dbReference type="HOGENOM" id="CLU_036819_0_0_6"/>
<dbReference type="OrthoDB" id="5590073at2"/>
<dbReference type="Proteomes" id="UP000002514">
    <property type="component" value="Chromosome"/>
</dbReference>
<dbReference type="GO" id="GO:0106435">
    <property type="term" value="F:carboxylesterase activity"/>
    <property type="evidence" value="ECO:0007669"/>
    <property type="project" value="UniProtKB-EC"/>
</dbReference>
<dbReference type="Gene3D" id="3.40.50.1820">
    <property type="entry name" value="alpha/beta hydrolase"/>
    <property type="match status" value="1"/>
</dbReference>
<dbReference type="HAMAP" id="MF_01063">
    <property type="entry name" value="FrsA"/>
    <property type="match status" value="1"/>
</dbReference>
<dbReference type="InterPro" id="IPR029058">
    <property type="entry name" value="AB_hydrolase_fold"/>
</dbReference>
<dbReference type="InterPro" id="IPR043423">
    <property type="entry name" value="FrsA"/>
</dbReference>
<dbReference type="InterPro" id="IPR010520">
    <property type="entry name" value="FrsA-like"/>
</dbReference>
<dbReference type="InterPro" id="IPR050261">
    <property type="entry name" value="FrsA_esterase"/>
</dbReference>
<dbReference type="NCBIfam" id="NF003460">
    <property type="entry name" value="PRK05077.1"/>
    <property type="match status" value="1"/>
</dbReference>
<dbReference type="PANTHER" id="PTHR22946">
    <property type="entry name" value="DIENELACTONE HYDROLASE DOMAIN-CONTAINING PROTEIN-RELATED"/>
    <property type="match status" value="1"/>
</dbReference>
<dbReference type="PANTHER" id="PTHR22946:SF4">
    <property type="entry name" value="ESTERASE FRSA"/>
    <property type="match status" value="1"/>
</dbReference>
<dbReference type="Pfam" id="PF06500">
    <property type="entry name" value="FrsA-like"/>
    <property type="match status" value="1"/>
</dbReference>
<dbReference type="SUPFAM" id="SSF53474">
    <property type="entry name" value="alpha/beta-Hydrolases"/>
    <property type="match status" value="1"/>
</dbReference>
<feature type="chain" id="PRO_0000197154" description="Esterase FrsA">
    <location>
        <begin position="1"/>
        <end position="415"/>
    </location>
</feature>
<feature type="region of interest" description="Disordered" evidence="2">
    <location>
        <begin position="1"/>
        <end position="23"/>
    </location>
</feature>
<accession>Q7N7B3</accession>
<keyword id="KW-0378">Hydrolase</keyword>
<keyword id="KW-1185">Reference proteome</keyword>
<keyword id="KW-0719">Serine esterase</keyword>
<evidence type="ECO:0000255" key="1">
    <source>
        <dbReference type="HAMAP-Rule" id="MF_01063"/>
    </source>
</evidence>
<evidence type="ECO:0000256" key="2">
    <source>
        <dbReference type="SAM" id="MobiDB-lite"/>
    </source>
</evidence>
<proteinExistence type="inferred from homology"/>
<gene>
    <name evidence="1" type="primary">frsA</name>
    <name type="ordered locus">plu1242</name>
</gene>
<organism>
    <name type="scientific">Photorhabdus laumondii subsp. laumondii (strain DSM 15139 / CIP 105565 / TT01)</name>
    <name type="common">Photorhabdus luminescens subsp. laumondii</name>
    <dbReference type="NCBI Taxonomy" id="243265"/>
    <lineage>
        <taxon>Bacteria</taxon>
        <taxon>Pseudomonadati</taxon>
        <taxon>Pseudomonadota</taxon>
        <taxon>Gammaproteobacteria</taxon>
        <taxon>Enterobacterales</taxon>
        <taxon>Morganellaceae</taxon>
        <taxon>Photorhabdus</taxon>
    </lineage>
</organism>
<comment type="function">
    <text evidence="1">Catalyzes the hydrolysis of esters.</text>
</comment>
<comment type="catalytic activity">
    <reaction evidence="1">
        <text>a carboxylic ester + H2O = an alcohol + a carboxylate + H(+)</text>
        <dbReference type="Rhea" id="RHEA:21164"/>
        <dbReference type="ChEBI" id="CHEBI:15377"/>
        <dbReference type="ChEBI" id="CHEBI:15378"/>
        <dbReference type="ChEBI" id="CHEBI:29067"/>
        <dbReference type="ChEBI" id="CHEBI:30879"/>
        <dbReference type="ChEBI" id="CHEBI:33308"/>
        <dbReference type="EC" id="3.1.1.1"/>
    </reaction>
</comment>
<comment type="similarity">
    <text evidence="1">Belongs to the FrsA family.</text>
</comment>
<protein>
    <recommendedName>
        <fullName evidence="1">Esterase FrsA</fullName>
        <ecNumber evidence="1">3.1.1.1</ecNumber>
    </recommendedName>
</protein>